<keyword id="KW-0004">4Fe-4S</keyword>
<keyword id="KW-0408">Iron</keyword>
<keyword id="KW-0411">Iron-sulfur</keyword>
<keyword id="KW-0456">Lyase</keyword>
<keyword id="KW-0479">Metal-binding</keyword>
<keyword id="KW-0949">S-adenosyl-L-methionine</keyword>
<keyword id="KW-0784">Thiamine biosynthesis</keyword>
<keyword id="KW-0862">Zinc</keyword>
<proteinExistence type="inferred from homology"/>
<sequence length="631" mass="70814">MSATKLTRREQRAQAQHFIDTLEGTAFPNSKRIYITGTQPGVRVPMREIQLSPTLIGGSKEQPQYEENEAIPVYDTSGPYGDPQIAINVQQGLAKLRQPWIDARGDTEELTVRSSDYTKARLADDGLDELRFSGVLTPKRAKAGRRVTQLHYARQGIITPEMEFIAIRENMGRERIRSEVLRHQHPGMSFGARLPENITAEFVRDEVAAGRAIIPANINHPESEPMIIGRNFLVKVNANIGNSAVTSSIEEEVEKLVWSTRWGADTVMDLSTGRYIHETREWILRNSPVPIGTVPIYQALEKVNGIAEDLTWEAFRDTLLEQAEQGVDYFTIHAGVLLRYVPMTAKRLTGIVSRGGSIMAKWCLSHHQENFLYQHFREICEICAAYDVSLSLGDGLRPGSIQDANDEAQFAELHTLGELTKIAWEYDVQVMIEGPGHVPMQMIRRNMTEELEHCHEAPFYTLGPLTTDIAPGYDHFTSGIGAAMIGWFGCAMLCYVTPKEHLGLPNKEDVKQGLITYKIAAHAADLAKGHPGAQIRDNAMSKARFEFRWEDQFNLALDPFTARAYHDETLPQESGKVAHFCSMCGPKFCSMKISQEVRDYAATQTIEMGIADMSENFRARGGEIYLRKEEA</sequence>
<name>THIC_ECO5E</name>
<feature type="chain" id="PRO_1000093207" description="Phosphomethylpyrimidine synthase">
    <location>
        <begin position="1"/>
        <end position="631"/>
    </location>
</feature>
<feature type="binding site" evidence="1">
    <location>
        <position position="239"/>
    </location>
    <ligand>
        <name>substrate</name>
    </ligand>
</feature>
<feature type="binding site" evidence="1">
    <location>
        <position position="268"/>
    </location>
    <ligand>
        <name>substrate</name>
    </ligand>
</feature>
<feature type="binding site" evidence="1">
    <location>
        <position position="297"/>
    </location>
    <ligand>
        <name>substrate</name>
    </ligand>
</feature>
<feature type="binding site" evidence="1">
    <location>
        <position position="333"/>
    </location>
    <ligand>
        <name>substrate</name>
    </ligand>
</feature>
<feature type="binding site" evidence="1">
    <location>
        <begin position="353"/>
        <end position="355"/>
    </location>
    <ligand>
        <name>substrate</name>
    </ligand>
</feature>
<feature type="binding site" evidence="1">
    <location>
        <begin position="394"/>
        <end position="397"/>
    </location>
    <ligand>
        <name>substrate</name>
    </ligand>
</feature>
<feature type="binding site" evidence="1">
    <location>
        <position position="433"/>
    </location>
    <ligand>
        <name>substrate</name>
    </ligand>
</feature>
<feature type="binding site" evidence="1">
    <location>
        <position position="437"/>
    </location>
    <ligand>
        <name>Zn(2+)</name>
        <dbReference type="ChEBI" id="CHEBI:29105"/>
    </ligand>
</feature>
<feature type="binding site" evidence="1">
    <location>
        <position position="460"/>
    </location>
    <ligand>
        <name>substrate</name>
    </ligand>
</feature>
<feature type="binding site" evidence="1">
    <location>
        <position position="501"/>
    </location>
    <ligand>
        <name>Zn(2+)</name>
        <dbReference type="ChEBI" id="CHEBI:29105"/>
    </ligand>
</feature>
<feature type="binding site" evidence="1">
    <location>
        <position position="581"/>
    </location>
    <ligand>
        <name>[4Fe-4S] cluster</name>
        <dbReference type="ChEBI" id="CHEBI:49883"/>
        <note>4Fe-4S-S-AdoMet</note>
    </ligand>
</feature>
<feature type="binding site" evidence="1">
    <location>
        <position position="584"/>
    </location>
    <ligand>
        <name>[4Fe-4S] cluster</name>
        <dbReference type="ChEBI" id="CHEBI:49883"/>
        <note>4Fe-4S-S-AdoMet</note>
    </ligand>
</feature>
<feature type="binding site" evidence="1">
    <location>
        <position position="589"/>
    </location>
    <ligand>
        <name>[4Fe-4S] cluster</name>
        <dbReference type="ChEBI" id="CHEBI:49883"/>
        <note>4Fe-4S-S-AdoMet</note>
    </ligand>
</feature>
<gene>
    <name evidence="1" type="primary">thiC</name>
    <name type="ordered locus">ECH74115_5462</name>
</gene>
<dbReference type="EC" id="4.1.99.17" evidence="1"/>
<dbReference type="EMBL" id="CP001164">
    <property type="protein sequence ID" value="ACI38072.1"/>
    <property type="molecule type" value="Genomic_DNA"/>
</dbReference>
<dbReference type="RefSeq" id="WP_001276909.1">
    <property type="nucleotide sequence ID" value="NC_011353.1"/>
</dbReference>
<dbReference type="SMR" id="B5Z090"/>
<dbReference type="KEGG" id="ecf:ECH74115_5462"/>
<dbReference type="HOGENOM" id="CLU_013181_2_1_6"/>
<dbReference type="UniPathway" id="UPA00060"/>
<dbReference type="GO" id="GO:0005829">
    <property type="term" value="C:cytosol"/>
    <property type="evidence" value="ECO:0007669"/>
    <property type="project" value="TreeGrafter"/>
</dbReference>
<dbReference type="GO" id="GO:0051539">
    <property type="term" value="F:4 iron, 4 sulfur cluster binding"/>
    <property type="evidence" value="ECO:0007669"/>
    <property type="project" value="UniProtKB-KW"/>
</dbReference>
<dbReference type="GO" id="GO:0016830">
    <property type="term" value="F:carbon-carbon lyase activity"/>
    <property type="evidence" value="ECO:0007669"/>
    <property type="project" value="InterPro"/>
</dbReference>
<dbReference type="GO" id="GO:0008270">
    <property type="term" value="F:zinc ion binding"/>
    <property type="evidence" value="ECO:0007669"/>
    <property type="project" value="UniProtKB-UniRule"/>
</dbReference>
<dbReference type="GO" id="GO:0009228">
    <property type="term" value="P:thiamine biosynthetic process"/>
    <property type="evidence" value="ECO:0007669"/>
    <property type="project" value="UniProtKB-KW"/>
</dbReference>
<dbReference type="GO" id="GO:0009229">
    <property type="term" value="P:thiamine diphosphate biosynthetic process"/>
    <property type="evidence" value="ECO:0007669"/>
    <property type="project" value="UniProtKB-UniRule"/>
</dbReference>
<dbReference type="FunFam" id="3.20.20.540:FF:000001">
    <property type="entry name" value="Phosphomethylpyrimidine synthase"/>
    <property type="match status" value="1"/>
</dbReference>
<dbReference type="Gene3D" id="6.10.250.620">
    <property type="match status" value="1"/>
</dbReference>
<dbReference type="Gene3D" id="3.20.20.540">
    <property type="entry name" value="Radical SAM ThiC family, central domain"/>
    <property type="match status" value="1"/>
</dbReference>
<dbReference type="HAMAP" id="MF_00089">
    <property type="entry name" value="ThiC"/>
    <property type="match status" value="1"/>
</dbReference>
<dbReference type="InterPro" id="IPR037509">
    <property type="entry name" value="ThiC"/>
</dbReference>
<dbReference type="InterPro" id="IPR025747">
    <property type="entry name" value="ThiC-associated_dom"/>
</dbReference>
<dbReference type="InterPro" id="IPR038521">
    <property type="entry name" value="ThiC/Bza_core_dom"/>
</dbReference>
<dbReference type="InterPro" id="IPR002817">
    <property type="entry name" value="ThiC/BzaA/B"/>
</dbReference>
<dbReference type="NCBIfam" id="NF006763">
    <property type="entry name" value="PRK09284.1"/>
    <property type="match status" value="1"/>
</dbReference>
<dbReference type="NCBIfam" id="NF009895">
    <property type="entry name" value="PRK13352.1"/>
    <property type="match status" value="1"/>
</dbReference>
<dbReference type="NCBIfam" id="TIGR00190">
    <property type="entry name" value="thiC"/>
    <property type="match status" value="1"/>
</dbReference>
<dbReference type="PANTHER" id="PTHR30557:SF1">
    <property type="entry name" value="PHOSPHOMETHYLPYRIMIDINE SYNTHASE, CHLOROPLASTIC"/>
    <property type="match status" value="1"/>
</dbReference>
<dbReference type="PANTHER" id="PTHR30557">
    <property type="entry name" value="THIAMINE BIOSYNTHESIS PROTEIN THIC"/>
    <property type="match status" value="1"/>
</dbReference>
<dbReference type="Pfam" id="PF13667">
    <property type="entry name" value="ThiC-associated"/>
    <property type="match status" value="1"/>
</dbReference>
<dbReference type="Pfam" id="PF01964">
    <property type="entry name" value="ThiC_Rad_SAM"/>
    <property type="match status" value="1"/>
</dbReference>
<dbReference type="SFLD" id="SFLDF00407">
    <property type="entry name" value="phosphomethylpyrimidine_syntha"/>
    <property type="match status" value="1"/>
</dbReference>
<dbReference type="SFLD" id="SFLDG01114">
    <property type="entry name" value="phosphomethylpyrimidine_syntha"/>
    <property type="match status" value="1"/>
</dbReference>
<dbReference type="SFLD" id="SFLDS00113">
    <property type="entry name" value="Radical_SAM_Phosphomethylpyrim"/>
    <property type="match status" value="1"/>
</dbReference>
<evidence type="ECO:0000255" key="1">
    <source>
        <dbReference type="HAMAP-Rule" id="MF_00089"/>
    </source>
</evidence>
<protein>
    <recommendedName>
        <fullName evidence="1">Phosphomethylpyrimidine synthase</fullName>
        <ecNumber evidence="1">4.1.99.17</ecNumber>
    </recommendedName>
    <alternativeName>
        <fullName evidence="1">Hydroxymethylpyrimidine phosphate synthase</fullName>
        <shortName evidence="1">HMP-P synthase</shortName>
        <shortName evidence="1">HMP-phosphate synthase</shortName>
        <shortName evidence="1">HMPP synthase</shortName>
    </alternativeName>
    <alternativeName>
        <fullName evidence="1">Thiamine biosynthesis protein ThiC</fullName>
    </alternativeName>
</protein>
<reference key="1">
    <citation type="journal article" date="2011" name="Proc. Natl. Acad. Sci. U.S.A.">
        <title>Genomic anatomy of Escherichia coli O157:H7 outbreaks.</title>
        <authorList>
            <person name="Eppinger M."/>
            <person name="Mammel M.K."/>
            <person name="Leclerc J.E."/>
            <person name="Ravel J."/>
            <person name="Cebula T.A."/>
        </authorList>
    </citation>
    <scope>NUCLEOTIDE SEQUENCE [LARGE SCALE GENOMIC DNA]</scope>
    <source>
        <strain>EC4115 / EHEC</strain>
    </source>
</reference>
<accession>B5Z090</accession>
<comment type="function">
    <text evidence="1">Catalyzes the synthesis of the hydroxymethylpyrimidine phosphate (HMP-P) moiety of thiamine from aminoimidazole ribotide (AIR) in a radical S-adenosyl-L-methionine (SAM)-dependent reaction.</text>
</comment>
<comment type="catalytic activity">
    <reaction evidence="1">
        <text>5-amino-1-(5-phospho-beta-D-ribosyl)imidazole + S-adenosyl-L-methionine = 4-amino-2-methyl-5-(phosphooxymethyl)pyrimidine + CO + 5'-deoxyadenosine + formate + L-methionine + 3 H(+)</text>
        <dbReference type="Rhea" id="RHEA:24840"/>
        <dbReference type="ChEBI" id="CHEBI:15378"/>
        <dbReference type="ChEBI" id="CHEBI:15740"/>
        <dbReference type="ChEBI" id="CHEBI:17245"/>
        <dbReference type="ChEBI" id="CHEBI:17319"/>
        <dbReference type="ChEBI" id="CHEBI:57844"/>
        <dbReference type="ChEBI" id="CHEBI:58354"/>
        <dbReference type="ChEBI" id="CHEBI:59789"/>
        <dbReference type="ChEBI" id="CHEBI:137981"/>
        <dbReference type="EC" id="4.1.99.17"/>
    </reaction>
</comment>
<comment type="cofactor">
    <cofactor evidence="1">
        <name>[4Fe-4S] cluster</name>
        <dbReference type="ChEBI" id="CHEBI:49883"/>
    </cofactor>
    <text evidence="1">Binds 1 [4Fe-4S] cluster per subunit. The cluster is coordinated with 3 cysteines and an exchangeable S-adenosyl-L-methionine.</text>
</comment>
<comment type="pathway">
    <text evidence="1">Cofactor biosynthesis; thiamine diphosphate biosynthesis.</text>
</comment>
<comment type="subunit">
    <text evidence="1">Homodimer.</text>
</comment>
<comment type="similarity">
    <text evidence="1">Belongs to the ThiC family.</text>
</comment>
<organism>
    <name type="scientific">Escherichia coli O157:H7 (strain EC4115 / EHEC)</name>
    <dbReference type="NCBI Taxonomy" id="444450"/>
    <lineage>
        <taxon>Bacteria</taxon>
        <taxon>Pseudomonadati</taxon>
        <taxon>Pseudomonadota</taxon>
        <taxon>Gammaproteobacteria</taxon>
        <taxon>Enterobacterales</taxon>
        <taxon>Enterobacteriaceae</taxon>
        <taxon>Escherichia</taxon>
    </lineage>
</organism>